<keyword id="KW-0067">ATP-binding</keyword>
<keyword id="KW-0133">Cell shape</keyword>
<keyword id="KW-0961">Cell wall biogenesis/degradation</keyword>
<keyword id="KW-0963">Cytoplasm</keyword>
<keyword id="KW-0436">Ligase</keyword>
<keyword id="KW-0460">Magnesium</keyword>
<keyword id="KW-0464">Manganese</keyword>
<keyword id="KW-0479">Metal-binding</keyword>
<keyword id="KW-0547">Nucleotide-binding</keyword>
<keyword id="KW-0573">Peptidoglycan synthesis</keyword>
<comment type="function">
    <text evidence="2">Cell wall formation.</text>
</comment>
<comment type="catalytic activity">
    <reaction evidence="2">
        <text>2 D-alanine + ATP = D-alanyl-D-alanine + ADP + phosphate + H(+)</text>
        <dbReference type="Rhea" id="RHEA:11224"/>
        <dbReference type="ChEBI" id="CHEBI:15378"/>
        <dbReference type="ChEBI" id="CHEBI:30616"/>
        <dbReference type="ChEBI" id="CHEBI:43474"/>
        <dbReference type="ChEBI" id="CHEBI:57416"/>
        <dbReference type="ChEBI" id="CHEBI:57822"/>
        <dbReference type="ChEBI" id="CHEBI:456216"/>
        <dbReference type="EC" id="6.3.2.4"/>
    </reaction>
</comment>
<comment type="cofactor">
    <cofactor evidence="1">
        <name>Mg(2+)</name>
        <dbReference type="ChEBI" id="CHEBI:18420"/>
    </cofactor>
    <cofactor evidence="1">
        <name>Mn(2+)</name>
        <dbReference type="ChEBI" id="CHEBI:29035"/>
    </cofactor>
    <text evidence="1">Binds 2 magnesium or manganese ions per subunit.</text>
</comment>
<comment type="pathway">
    <text evidence="2">Cell wall biogenesis; peptidoglycan biosynthesis.</text>
</comment>
<comment type="subcellular location">
    <subcellularLocation>
        <location evidence="2">Cytoplasm</location>
    </subcellularLocation>
</comment>
<comment type="similarity">
    <text evidence="2">Belongs to the D-alanine--D-alanine ligase family.</text>
</comment>
<dbReference type="EC" id="6.3.2.4" evidence="2"/>
<dbReference type="EMBL" id="AL157959">
    <property type="protein sequence ID" value="CAM09163.1"/>
    <property type="molecule type" value="Genomic_DNA"/>
</dbReference>
<dbReference type="PIR" id="H81776">
    <property type="entry name" value="H81776"/>
</dbReference>
<dbReference type="RefSeq" id="WP_002236713.1">
    <property type="nucleotide sequence ID" value="NC_003116.1"/>
</dbReference>
<dbReference type="SMR" id="Q9JSZ9"/>
<dbReference type="EnsemblBacteria" id="CAM09163">
    <property type="protein sequence ID" value="CAM09163"/>
    <property type="gene ID" value="NMA2060"/>
</dbReference>
<dbReference type="KEGG" id="nma:NMA2060"/>
<dbReference type="HOGENOM" id="CLU_039268_1_2_4"/>
<dbReference type="UniPathway" id="UPA00219"/>
<dbReference type="Proteomes" id="UP000000626">
    <property type="component" value="Chromosome"/>
</dbReference>
<dbReference type="GO" id="GO:0005737">
    <property type="term" value="C:cytoplasm"/>
    <property type="evidence" value="ECO:0007669"/>
    <property type="project" value="UniProtKB-SubCell"/>
</dbReference>
<dbReference type="GO" id="GO:0005524">
    <property type="term" value="F:ATP binding"/>
    <property type="evidence" value="ECO:0007669"/>
    <property type="project" value="UniProtKB-KW"/>
</dbReference>
<dbReference type="GO" id="GO:0008716">
    <property type="term" value="F:D-alanine-D-alanine ligase activity"/>
    <property type="evidence" value="ECO:0007669"/>
    <property type="project" value="UniProtKB-UniRule"/>
</dbReference>
<dbReference type="GO" id="GO:0046872">
    <property type="term" value="F:metal ion binding"/>
    <property type="evidence" value="ECO:0007669"/>
    <property type="project" value="UniProtKB-KW"/>
</dbReference>
<dbReference type="GO" id="GO:0071555">
    <property type="term" value="P:cell wall organization"/>
    <property type="evidence" value="ECO:0007669"/>
    <property type="project" value="UniProtKB-KW"/>
</dbReference>
<dbReference type="GO" id="GO:0009252">
    <property type="term" value="P:peptidoglycan biosynthetic process"/>
    <property type="evidence" value="ECO:0007669"/>
    <property type="project" value="UniProtKB-UniRule"/>
</dbReference>
<dbReference type="GO" id="GO:0008360">
    <property type="term" value="P:regulation of cell shape"/>
    <property type="evidence" value="ECO:0007669"/>
    <property type="project" value="UniProtKB-KW"/>
</dbReference>
<dbReference type="FunFam" id="3.30.1490.20:FF:000023">
    <property type="entry name" value="D-alanine--D-alanine ligase"/>
    <property type="match status" value="1"/>
</dbReference>
<dbReference type="FunFam" id="3.30.470.20:FF:000008">
    <property type="entry name" value="D-alanine--D-alanine ligase"/>
    <property type="match status" value="1"/>
</dbReference>
<dbReference type="FunFam" id="3.40.50.20:FF:000013">
    <property type="entry name" value="D-alanine--D-alanine ligase"/>
    <property type="match status" value="1"/>
</dbReference>
<dbReference type="Gene3D" id="3.40.50.20">
    <property type="match status" value="1"/>
</dbReference>
<dbReference type="Gene3D" id="3.30.1490.20">
    <property type="entry name" value="ATP-grasp fold, A domain"/>
    <property type="match status" value="1"/>
</dbReference>
<dbReference type="Gene3D" id="3.30.470.20">
    <property type="entry name" value="ATP-grasp fold, B domain"/>
    <property type="match status" value="1"/>
</dbReference>
<dbReference type="HAMAP" id="MF_00047">
    <property type="entry name" value="Dala_Dala_lig"/>
    <property type="match status" value="1"/>
</dbReference>
<dbReference type="InterPro" id="IPR011761">
    <property type="entry name" value="ATP-grasp"/>
</dbReference>
<dbReference type="InterPro" id="IPR013815">
    <property type="entry name" value="ATP_grasp_subdomain_1"/>
</dbReference>
<dbReference type="InterPro" id="IPR000291">
    <property type="entry name" value="D-Ala_lig_Van_CS"/>
</dbReference>
<dbReference type="InterPro" id="IPR005905">
    <property type="entry name" value="D_ala_D_ala"/>
</dbReference>
<dbReference type="InterPro" id="IPR011095">
    <property type="entry name" value="Dala_Dala_lig_C"/>
</dbReference>
<dbReference type="InterPro" id="IPR011127">
    <property type="entry name" value="Dala_Dala_lig_N"/>
</dbReference>
<dbReference type="InterPro" id="IPR016185">
    <property type="entry name" value="PreATP-grasp_dom_sf"/>
</dbReference>
<dbReference type="NCBIfam" id="TIGR01205">
    <property type="entry name" value="D_ala_D_alaTIGR"/>
    <property type="match status" value="1"/>
</dbReference>
<dbReference type="NCBIfam" id="NF002378">
    <property type="entry name" value="PRK01372.1"/>
    <property type="match status" value="1"/>
</dbReference>
<dbReference type="PANTHER" id="PTHR23132">
    <property type="entry name" value="D-ALANINE--D-ALANINE LIGASE"/>
    <property type="match status" value="1"/>
</dbReference>
<dbReference type="PANTHER" id="PTHR23132:SF23">
    <property type="entry name" value="D-ALANINE--D-ALANINE LIGASE B"/>
    <property type="match status" value="1"/>
</dbReference>
<dbReference type="Pfam" id="PF07478">
    <property type="entry name" value="Dala_Dala_lig_C"/>
    <property type="match status" value="1"/>
</dbReference>
<dbReference type="Pfam" id="PF01820">
    <property type="entry name" value="Dala_Dala_lig_N"/>
    <property type="match status" value="1"/>
</dbReference>
<dbReference type="PIRSF" id="PIRSF039102">
    <property type="entry name" value="Ddl/VanB"/>
    <property type="match status" value="1"/>
</dbReference>
<dbReference type="SUPFAM" id="SSF56059">
    <property type="entry name" value="Glutathione synthetase ATP-binding domain-like"/>
    <property type="match status" value="1"/>
</dbReference>
<dbReference type="SUPFAM" id="SSF52440">
    <property type="entry name" value="PreATP-grasp domain"/>
    <property type="match status" value="1"/>
</dbReference>
<dbReference type="PROSITE" id="PS50975">
    <property type="entry name" value="ATP_GRASP"/>
    <property type="match status" value="1"/>
</dbReference>
<dbReference type="PROSITE" id="PS00843">
    <property type="entry name" value="DALA_DALA_LIGASE_1"/>
    <property type="match status" value="1"/>
</dbReference>
<dbReference type="PROSITE" id="PS00844">
    <property type="entry name" value="DALA_DALA_LIGASE_2"/>
    <property type="match status" value="1"/>
</dbReference>
<proteinExistence type="inferred from homology"/>
<organism>
    <name type="scientific">Neisseria meningitidis serogroup A / serotype 4A (strain DSM 15465 / Z2491)</name>
    <dbReference type="NCBI Taxonomy" id="122587"/>
    <lineage>
        <taxon>Bacteria</taxon>
        <taxon>Pseudomonadati</taxon>
        <taxon>Pseudomonadota</taxon>
        <taxon>Betaproteobacteria</taxon>
        <taxon>Neisseriales</taxon>
        <taxon>Neisseriaceae</taxon>
        <taxon>Neisseria</taxon>
    </lineage>
</organism>
<name>DDL_NEIMA</name>
<feature type="chain" id="PRO_0000177845" description="D-alanine--D-alanine ligase">
    <location>
        <begin position="1"/>
        <end position="304"/>
    </location>
</feature>
<feature type="domain" description="ATP-grasp" evidence="2">
    <location>
        <begin position="103"/>
        <end position="299"/>
    </location>
</feature>
<feature type="binding site" evidence="2">
    <location>
        <begin position="129"/>
        <end position="184"/>
    </location>
    <ligand>
        <name>ATP</name>
        <dbReference type="ChEBI" id="CHEBI:30616"/>
    </ligand>
</feature>
<feature type="binding site" evidence="2">
    <location>
        <position position="253"/>
    </location>
    <ligand>
        <name>Mg(2+)</name>
        <dbReference type="ChEBI" id="CHEBI:18420"/>
        <label>1</label>
    </ligand>
</feature>
<feature type="binding site" evidence="2">
    <location>
        <position position="266"/>
    </location>
    <ligand>
        <name>Mg(2+)</name>
        <dbReference type="ChEBI" id="CHEBI:18420"/>
        <label>1</label>
    </ligand>
</feature>
<feature type="binding site" evidence="2">
    <location>
        <position position="266"/>
    </location>
    <ligand>
        <name>Mg(2+)</name>
        <dbReference type="ChEBI" id="CHEBI:18420"/>
        <label>2</label>
    </ligand>
</feature>
<feature type="binding site" evidence="2">
    <location>
        <position position="268"/>
    </location>
    <ligand>
        <name>Mg(2+)</name>
        <dbReference type="ChEBI" id="CHEBI:18420"/>
        <label>2</label>
    </ligand>
</feature>
<gene>
    <name evidence="2" type="primary">ddl</name>
    <name type="synonym">ddlB</name>
    <name type="ordered locus">NMA2060</name>
</gene>
<reference key="1">
    <citation type="journal article" date="2000" name="Nature">
        <title>Complete DNA sequence of a serogroup A strain of Neisseria meningitidis Z2491.</title>
        <authorList>
            <person name="Parkhill J."/>
            <person name="Achtman M."/>
            <person name="James K.D."/>
            <person name="Bentley S.D."/>
            <person name="Churcher C.M."/>
            <person name="Klee S.R."/>
            <person name="Morelli G."/>
            <person name="Basham D."/>
            <person name="Brown D."/>
            <person name="Chillingworth T."/>
            <person name="Davies R.M."/>
            <person name="Davis P."/>
            <person name="Devlin K."/>
            <person name="Feltwell T."/>
            <person name="Hamlin N."/>
            <person name="Holroyd S."/>
            <person name="Jagels K."/>
            <person name="Leather S."/>
            <person name="Moule S."/>
            <person name="Mungall K.L."/>
            <person name="Quail M.A."/>
            <person name="Rajandream M.A."/>
            <person name="Rutherford K.M."/>
            <person name="Simmonds M."/>
            <person name="Skelton J."/>
            <person name="Whitehead S."/>
            <person name="Spratt B.G."/>
            <person name="Barrell B.G."/>
        </authorList>
    </citation>
    <scope>NUCLEOTIDE SEQUENCE [LARGE SCALE GENOMIC DNA]</scope>
    <source>
        <strain>DSM 15465 / Z2491</strain>
    </source>
</reference>
<protein>
    <recommendedName>
        <fullName evidence="2">D-alanine--D-alanine ligase</fullName>
        <ecNumber evidence="2">6.3.2.4</ecNumber>
    </recommendedName>
    <alternativeName>
        <fullName evidence="2">D-Ala-D-Ala ligase</fullName>
    </alternativeName>
    <alternativeName>
        <fullName evidence="2">D-alanylalanine synthetase</fullName>
    </alternativeName>
</protein>
<sequence length="304" mass="32587">MQNFGKVAVLMGGFSSEREISLDSGTAILNALKSKGIDAYAFDPKETPLSELKAQGFQTAFNILHGTYGEDGAVQGALELLGIPYTGSGVAASAIGMDKYRCKLIWQALGLPVPEFAVLHDDTDFDAVEEKLGLPMFVKPAAEGSSVGVVKVKGKGRLKSVYEELKHFQGEIIAERFIGGGEYSCPVLNGKGLPGIHIIPATEFYDYEAKYNRNDTIYQCPSEDLTEAEESLMRELAVRGAQAIGAEGCVRVDFLKDTDGKLYLLEINTLPGMTGHSLVPKSAAVMGVGFADLCIEILKTAHVG</sequence>
<evidence type="ECO:0000250" key="1"/>
<evidence type="ECO:0000255" key="2">
    <source>
        <dbReference type="HAMAP-Rule" id="MF_00047"/>
    </source>
</evidence>
<accession>Q9JSZ9</accession>
<accession>A1ITP6</accession>